<comment type="function">
    <text evidence="1">Catalyzes the transfer of 4-deoxy-4-formamido-L-arabinose from UDP to undecaprenyl phosphate. The modified arabinose is attached to lipid A and is required for resistance to polymyxin and cationic antimicrobial peptides.</text>
</comment>
<comment type="catalytic activity">
    <reaction evidence="1">
        <text>UDP-4-deoxy-4-formamido-beta-L-arabinose + di-trans,octa-cis-undecaprenyl phosphate = 4-deoxy-4-formamido-alpha-L-arabinopyranosyl di-trans,octa-cis-undecaprenyl phosphate + UDP</text>
        <dbReference type="Rhea" id="RHEA:27722"/>
        <dbReference type="ChEBI" id="CHEBI:58223"/>
        <dbReference type="ChEBI" id="CHEBI:58709"/>
        <dbReference type="ChEBI" id="CHEBI:58909"/>
        <dbReference type="ChEBI" id="CHEBI:60392"/>
        <dbReference type="EC" id="2.4.2.53"/>
    </reaction>
</comment>
<comment type="pathway">
    <text evidence="1">Glycolipid biosynthesis; 4-amino-4-deoxy-alpha-L-arabinose undecaprenyl phosphate biosynthesis; 4-amino-4-deoxy-alpha-L-arabinose undecaprenyl phosphate from UDP-4-deoxy-4-formamido-beta-L-arabinose and undecaprenyl phosphate: step 1/2.</text>
</comment>
<comment type="pathway">
    <text evidence="1">Bacterial outer membrane biogenesis; lipopolysaccharide biosynthesis.</text>
</comment>
<comment type="subcellular location">
    <subcellularLocation>
        <location evidence="1">Cell inner membrane</location>
        <topology evidence="1">Multi-pass membrane protein</topology>
    </subcellularLocation>
</comment>
<comment type="similarity">
    <text evidence="1">Belongs to the glycosyltransferase 2 family.</text>
</comment>
<proteinExistence type="inferred from homology"/>
<evidence type="ECO:0000255" key="1">
    <source>
        <dbReference type="HAMAP-Rule" id="MF_01164"/>
    </source>
</evidence>
<gene>
    <name evidence="1" type="primary">arnC</name>
    <name type="ordered locus">ECA3145</name>
</gene>
<name>ARNC_PECAS</name>
<protein>
    <recommendedName>
        <fullName evidence="1">Undecaprenyl-phosphate 4-deoxy-4-formamido-L-arabinose transferase</fullName>
        <ecNumber evidence="1">2.4.2.53</ecNumber>
    </recommendedName>
    <alternativeName>
        <fullName evidence="1">Undecaprenyl-phosphate Ara4FN transferase</fullName>
        <shortName evidence="1">Ara4FN transferase</shortName>
    </alternativeName>
</protein>
<accession>Q6D2F0</accession>
<keyword id="KW-0046">Antibiotic resistance</keyword>
<keyword id="KW-0997">Cell inner membrane</keyword>
<keyword id="KW-1003">Cell membrane</keyword>
<keyword id="KW-0328">Glycosyltransferase</keyword>
<keyword id="KW-0441">Lipid A biosynthesis</keyword>
<keyword id="KW-0444">Lipid biosynthesis</keyword>
<keyword id="KW-0443">Lipid metabolism</keyword>
<keyword id="KW-0448">Lipopolysaccharide biosynthesis</keyword>
<keyword id="KW-0472">Membrane</keyword>
<keyword id="KW-1185">Reference proteome</keyword>
<keyword id="KW-0808">Transferase</keyword>
<keyword id="KW-0812">Transmembrane</keyword>
<keyword id="KW-1133">Transmembrane helix</keyword>
<sequence length="327" mass="36563">MIDDIKNVSVVIPVYNEEESLPVLIERTLAACRKIGKPWEIILVDDGSNDRSAELLTEAASDPEKHIIAVLLNRNYGQHSAIMAGFQQAVGDVVITLDADLQNPPEEIPRLVEYASQGYDVVGTVRANRQDSLFRKLASKTINMMIRRSTGKSMADYGCMLRAYRRHIVSAMLRCHERSTFIPILANTFARKTIEIDVLHAEREFGTSKYSFLKLINLMYDLLTCLTTTPLRILSLIGSVVALSGFLLALLLIGLRLFFGAEWAAEGVFTLFAVLFMFIGAQFVGMGLLGEYIGRIYTDVRARPRYFVQKTVSAATPLTTSLRDEEE</sequence>
<dbReference type="EC" id="2.4.2.53" evidence="1"/>
<dbReference type="EMBL" id="BX950851">
    <property type="protein sequence ID" value="CAG76044.1"/>
    <property type="molecule type" value="Genomic_DNA"/>
</dbReference>
<dbReference type="RefSeq" id="WP_011094668.1">
    <property type="nucleotide sequence ID" value="NC_004547.2"/>
</dbReference>
<dbReference type="SMR" id="Q6D2F0"/>
<dbReference type="STRING" id="218491.ECA3145"/>
<dbReference type="CAZy" id="GT2">
    <property type="family name" value="Glycosyltransferase Family 2"/>
</dbReference>
<dbReference type="GeneID" id="57209830"/>
<dbReference type="KEGG" id="eca:ECA3145"/>
<dbReference type="PATRIC" id="fig|218491.5.peg.3182"/>
<dbReference type="eggNOG" id="COG0463">
    <property type="taxonomic scope" value="Bacteria"/>
</dbReference>
<dbReference type="HOGENOM" id="CLU_033536_0_0_6"/>
<dbReference type="OrthoDB" id="9811884at2"/>
<dbReference type="UniPathway" id="UPA00030"/>
<dbReference type="UniPathway" id="UPA00036">
    <property type="reaction ID" value="UER00495"/>
</dbReference>
<dbReference type="Proteomes" id="UP000007966">
    <property type="component" value="Chromosome"/>
</dbReference>
<dbReference type="GO" id="GO:0005886">
    <property type="term" value="C:plasma membrane"/>
    <property type="evidence" value="ECO:0007669"/>
    <property type="project" value="UniProtKB-SubCell"/>
</dbReference>
<dbReference type="GO" id="GO:0016780">
    <property type="term" value="F:phosphotransferase activity, for other substituted phosphate groups"/>
    <property type="evidence" value="ECO:0007669"/>
    <property type="project" value="UniProtKB-UniRule"/>
</dbReference>
<dbReference type="GO" id="GO:0099621">
    <property type="term" value="F:undecaprenyl-phosphate 4-deoxy-4-formamido-L-arabinose transferase activity"/>
    <property type="evidence" value="ECO:0007669"/>
    <property type="project" value="UniProtKB-EC"/>
</dbReference>
<dbReference type="GO" id="GO:0036108">
    <property type="term" value="P:4-amino-4-deoxy-alpha-L-arabinopyranosyl undecaprenyl phosphate biosynthetic process"/>
    <property type="evidence" value="ECO:0007669"/>
    <property type="project" value="UniProtKB-UniRule"/>
</dbReference>
<dbReference type="GO" id="GO:0009245">
    <property type="term" value="P:lipid A biosynthetic process"/>
    <property type="evidence" value="ECO:0007669"/>
    <property type="project" value="UniProtKB-UniRule"/>
</dbReference>
<dbReference type="GO" id="GO:0009103">
    <property type="term" value="P:lipopolysaccharide biosynthetic process"/>
    <property type="evidence" value="ECO:0007669"/>
    <property type="project" value="UniProtKB-UniRule"/>
</dbReference>
<dbReference type="GO" id="GO:0046677">
    <property type="term" value="P:response to antibiotic"/>
    <property type="evidence" value="ECO:0007669"/>
    <property type="project" value="UniProtKB-KW"/>
</dbReference>
<dbReference type="CDD" id="cd04187">
    <property type="entry name" value="DPM1_like_bac"/>
    <property type="match status" value="1"/>
</dbReference>
<dbReference type="FunFam" id="3.90.550.10:FF:000019">
    <property type="entry name" value="Undecaprenyl-phosphate 4-deoxy-4-formamido-L-arabinose transferase"/>
    <property type="match status" value="1"/>
</dbReference>
<dbReference type="Gene3D" id="3.90.550.10">
    <property type="entry name" value="Spore Coat Polysaccharide Biosynthesis Protein SpsA, Chain A"/>
    <property type="match status" value="1"/>
</dbReference>
<dbReference type="HAMAP" id="MF_01164">
    <property type="entry name" value="ArnC_transfer"/>
    <property type="match status" value="1"/>
</dbReference>
<dbReference type="InterPro" id="IPR022857">
    <property type="entry name" value="ArnC_tfrase"/>
</dbReference>
<dbReference type="InterPro" id="IPR001173">
    <property type="entry name" value="Glyco_trans_2-like"/>
</dbReference>
<dbReference type="InterPro" id="IPR050256">
    <property type="entry name" value="Glycosyltransferase_2"/>
</dbReference>
<dbReference type="InterPro" id="IPR029044">
    <property type="entry name" value="Nucleotide-diphossugar_trans"/>
</dbReference>
<dbReference type="NCBIfam" id="NF007986">
    <property type="entry name" value="PRK10714.1"/>
    <property type="match status" value="1"/>
</dbReference>
<dbReference type="PANTHER" id="PTHR48090:SF3">
    <property type="entry name" value="UNDECAPRENYL-PHOSPHATE 4-DEOXY-4-FORMAMIDO-L-ARABINOSE TRANSFERASE"/>
    <property type="match status" value="1"/>
</dbReference>
<dbReference type="PANTHER" id="PTHR48090">
    <property type="entry name" value="UNDECAPRENYL-PHOSPHATE 4-DEOXY-4-FORMAMIDO-L-ARABINOSE TRANSFERASE-RELATED"/>
    <property type="match status" value="1"/>
</dbReference>
<dbReference type="Pfam" id="PF00535">
    <property type="entry name" value="Glycos_transf_2"/>
    <property type="match status" value="1"/>
</dbReference>
<dbReference type="SUPFAM" id="SSF53448">
    <property type="entry name" value="Nucleotide-diphospho-sugar transferases"/>
    <property type="match status" value="1"/>
</dbReference>
<organism>
    <name type="scientific">Pectobacterium atrosepticum (strain SCRI 1043 / ATCC BAA-672)</name>
    <name type="common">Erwinia carotovora subsp. atroseptica</name>
    <dbReference type="NCBI Taxonomy" id="218491"/>
    <lineage>
        <taxon>Bacteria</taxon>
        <taxon>Pseudomonadati</taxon>
        <taxon>Pseudomonadota</taxon>
        <taxon>Gammaproteobacteria</taxon>
        <taxon>Enterobacterales</taxon>
        <taxon>Pectobacteriaceae</taxon>
        <taxon>Pectobacterium</taxon>
    </lineage>
</organism>
<feature type="chain" id="PRO_0000059198" description="Undecaprenyl-phosphate 4-deoxy-4-formamido-L-arabinose transferase">
    <location>
        <begin position="1"/>
        <end position="327"/>
    </location>
</feature>
<feature type="transmembrane region" description="Helical" evidence="1">
    <location>
        <begin position="233"/>
        <end position="253"/>
    </location>
</feature>
<feature type="transmembrane region" description="Helical" evidence="1">
    <location>
        <begin position="268"/>
        <end position="288"/>
    </location>
</feature>
<reference key="1">
    <citation type="journal article" date="2004" name="Proc. Natl. Acad. Sci. U.S.A.">
        <title>Genome sequence of the enterobacterial phytopathogen Erwinia carotovora subsp. atroseptica and characterization of virulence factors.</title>
        <authorList>
            <person name="Bell K.S."/>
            <person name="Sebaihia M."/>
            <person name="Pritchard L."/>
            <person name="Holden M.T.G."/>
            <person name="Hyman L.J."/>
            <person name="Holeva M.C."/>
            <person name="Thomson N.R."/>
            <person name="Bentley S.D."/>
            <person name="Churcher L.J.C."/>
            <person name="Mungall K."/>
            <person name="Atkin R."/>
            <person name="Bason N."/>
            <person name="Brooks K."/>
            <person name="Chillingworth T."/>
            <person name="Clark K."/>
            <person name="Doggett J."/>
            <person name="Fraser A."/>
            <person name="Hance Z."/>
            <person name="Hauser H."/>
            <person name="Jagels K."/>
            <person name="Moule S."/>
            <person name="Norbertczak H."/>
            <person name="Ormond D."/>
            <person name="Price C."/>
            <person name="Quail M.A."/>
            <person name="Sanders M."/>
            <person name="Walker D."/>
            <person name="Whitehead S."/>
            <person name="Salmond G.P.C."/>
            <person name="Birch P.R.J."/>
            <person name="Parkhill J."/>
            <person name="Toth I.K."/>
        </authorList>
    </citation>
    <scope>NUCLEOTIDE SEQUENCE [LARGE SCALE GENOMIC DNA]</scope>
    <source>
        <strain>SCRI 1043 / ATCC BAA-672</strain>
    </source>
</reference>